<gene>
    <name evidence="1" type="primary">prfC</name>
    <name type="ordered locus">USA300HOU_0978</name>
</gene>
<feature type="chain" id="PRO_1000075173" description="Peptide chain release factor 3">
    <location>
        <begin position="1"/>
        <end position="520"/>
    </location>
</feature>
<feature type="domain" description="tr-type G">
    <location>
        <begin position="8"/>
        <end position="277"/>
    </location>
</feature>
<feature type="binding site" evidence="1">
    <location>
        <begin position="17"/>
        <end position="24"/>
    </location>
    <ligand>
        <name>GTP</name>
        <dbReference type="ChEBI" id="CHEBI:37565"/>
    </ligand>
</feature>
<feature type="binding site" evidence="1">
    <location>
        <begin position="85"/>
        <end position="89"/>
    </location>
    <ligand>
        <name>GTP</name>
        <dbReference type="ChEBI" id="CHEBI:37565"/>
    </ligand>
</feature>
<feature type="binding site" evidence="1">
    <location>
        <begin position="139"/>
        <end position="142"/>
    </location>
    <ligand>
        <name>GTP</name>
        <dbReference type="ChEBI" id="CHEBI:37565"/>
    </ligand>
</feature>
<proteinExistence type="inferred from homology"/>
<dbReference type="EMBL" id="CP000730">
    <property type="protein sequence ID" value="ABX28998.1"/>
    <property type="molecule type" value="Genomic_DNA"/>
</dbReference>
<dbReference type="RefSeq" id="WP_001049959.1">
    <property type="nucleotide sequence ID" value="NC_010079.1"/>
</dbReference>
<dbReference type="SMR" id="A8Z0C4"/>
<dbReference type="KEGG" id="sax:USA300HOU_0978"/>
<dbReference type="HOGENOM" id="CLU_002794_2_1_9"/>
<dbReference type="GO" id="GO:0005829">
    <property type="term" value="C:cytosol"/>
    <property type="evidence" value="ECO:0007669"/>
    <property type="project" value="TreeGrafter"/>
</dbReference>
<dbReference type="GO" id="GO:0005525">
    <property type="term" value="F:GTP binding"/>
    <property type="evidence" value="ECO:0007669"/>
    <property type="project" value="UniProtKB-UniRule"/>
</dbReference>
<dbReference type="GO" id="GO:0003924">
    <property type="term" value="F:GTPase activity"/>
    <property type="evidence" value="ECO:0007669"/>
    <property type="project" value="InterPro"/>
</dbReference>
<dbReference type="GO" id="GO:0016150">
    <property type="term" value="F:translation release factor activity, codon nonspecific"/>
    <property type="evidence" value="ECO:0007669"/>
    <property type="project" value="TreeGrafter"/>
</dbReference>
<dbReference type="GO" id="GO:0016149">
    <property type="term" value="F:translation release factor activity, codon specific"/>
    <property type="evidence" value="ECO:0007669"/>
    <property type="project" value="UniProtKB-UniRule"/>
</dbReference>
<dbReference type="GO" id="GO:0006449">
    <property type="term" value="P:regulation of translational termination"/>
    <property type="evidence" value="ECO:0007669"/>
    <property type="project" value="UniProtKB-UniRule"/>
</dbReference>
<dbReference type="CDD" id="cd04169">
    <property type="entry name" value="RF3"/>
    <property type="match status" value="1"/>
</dbReference>
<dbReference type="CDD" id="cd16259">
    <property type="entry name" value="RF3_III"/>
    <property type="match status" value="1"/>
</dbReference>
<dbReference type="FunFam" id="2.40.30.10:FF:000040">
    <property type="entry name" value="Peptide chain release factor 3"/>
    <property type="match status" value="1"/>
</dbReference>
<dbReference type="FunFam" id="3.30.70.3280:FF:000001">
    <property type="entry name" value="Peptide chain release factor 3"/>
    <property type="match status" value="1"/>
</dbReference>
<dbReference type="FunFam" id="3.40.50.300:FF:000542">
    <property type="entry name" value="Peptide chain release factor 3"/>
    <property type="match status" value="1"/>
</dbReference>
<dbReference type="Gene3D" id="3.40.50.300">
    <property type="entry name" value="P-loop containing nucleotide triphosphate hydrolases"/>
    <property type="match status" value="1"/>
</dbReference>
<dbReference type="Gene3D" id="3.30.70.3280">
    <property type="entry name" value="Peptide chain release factor 3, domain III"/>
    <property type="match status" value="1"/>
</dbReference>
<dbReference type="Gene3D" id="2.40.30.10">
    <property type="entry name" value="Translation factors"/>
    <property type="match status" value="1"/>
</dbReference>
<dbReference type="HAMAP" id="MF_00072">
    <property type="entry name" value="Rel_fac_3"/>
    <property type="match status" value="1"/>
</dbReference>
<dbReference type="InterPro" id="IPR053905">
    <property type="entry name" value="EF-G-like_DII"/>
</dbReference>
<dbReference type="InterPro" id="IPR035647">
    <property type="entry name" value="EFG_III/V"/>
</dbReference>
<dbReference type="InterPro" id="IPR031157">
    <property type="entry name" value="G_TR_CS"/>
</dbReference>
<dbReference type="InterPro" id="IPR027417">
    <property type="entry name" value="P-loop_NTPase"/>
</dbReference>
<dbReference type="InterPro" id="IPR004548">
    <property type="entry name" value="PrfC"/>
</dbReference>
<dbReference type="InterPro" id="IPR032090">
    <property type="entry name" value="RF3_C"/>
</dbReference>
<dbReference type="InterPro" id="IPR038467">
    <property type="entry name" value="RF3_dom_3_sf"/>
</dbReference>
<dbReference type="InterPro" id="IPR041732">
    <property type="entry name" value="RF3_GTP-bd"/>
</dbReference>
<dbReference type="InterPro" id="IPR005225">
    <property type="entry name" value="Small_GTP-bd"/>
</dbReference>
<dbReference type="InterPro" id="IPR000795">
    <property type="entry name" value="T_Tr_GTP-bd_dom"/>
</dbReference>
<dbReference type="InterPro" id="IPR009000">
    <property type="entry name" value="Transl_B-barrel_sf"/>
</dbReference>
<dbReference type="NCBIfam" id="TIGR00503">
    <property type="entry name" value="prfC"/>
    <property type="match status" value="1"/>
</dbReference>
<dbReference type="NCBIfam" id="NF001964">
    <property type="entry name" value="PRK00741.1"/>
    <property type="match status" value="1"/>
</dbReference>
<dbReference type="NCBIfam" id="TIGR00231">
    <property type="entry name" value="small_GTP"/>
    <property type="match status" value="1"/>
</dbReference>
<dbReference type="PANTHER" id="PTHR43556">
    <property type="entry name" value="PEPTIDE CHAIN RELEASE FACTOR RF3"/>
    <property type="match status" value="1"/>
</dbReference>
<dbReference type="PANTHER" id="PTHR43556:SF2">
    <property type="entry name" value="PEPTIDE CHAIN RELEASE FACTOR RF3"/>
    <property type="match status" value="1"/>
</dbReference>
<dbReference type="Pfam" id="PF22042">
    <property type="entry name" value="EF-G_D2"/>
    <property type="match status" value="1"/>
</dbReference>
<dbReference type="Pfam" id="PF00009">
    <property type="entry name" value="GTP_EFTU"/>
    <property type="match status" value="1"/>
</dbReference>
<dbReference type="Pfam" id="PF16658">
    <property type="entry name" value="RF3_C"/>
    <property type="match status" value="1"/>
</dbReference>
<dbReference type="PRINTS" id="PR00315">
    <property type="entry name" value="ELONGATNFCT"/>
</dbReference>
<dbReference type="SUPFAM" id="SSF54980">
    <property type="entry name" value="EF-G C-terminal domain-like"/>
    <property type="match status" value="1"/>
</dbReference>
<dbReference type="SUPFAM" id="SSF52540">
    <property type="entry name" value="P-loop containing nucleoside triphosphate hydrolases"/>
    <property type="match status" value="1"/>
</dbReference>
<dbReference type="SUPFAM" id="SSF50447">
    <property type="entry name" value="Translation proteins"/>
    <property type="match status" value="1"/>
</dbReference>
<dbReference type="PROSITE" id="PS00301">
    <property type="entry name" value="G_TR_1"/>
    <property type="match status" value="1"/>
</dbReference>
<dbReference type="PROSITE" id="PS51722">
    <property type="entry name" value="G_TR_2"/>
    <property type="match status" value="1"/>
</dbReference>
<keyword id="KW-0963">Cytoplasm</keyword>
<keyword id="KW-0342">GTP-binding</keyword>
<keyword id="KW-0547">Nucleotide-binding</keyword>
<keyword id="KW-0648">Protein biosynthesis</keyword>
<protein>
    <recommendedName>
        <fullName evidence="1">Peptide chain release factor 3</fullName>
        <shortName evidence="1">RF-3</shortName>
    </recommendedName>
</protein>
<evidence type="ECO:0000255" key="1">
    <source>
        <dbReference type="HAMAP-Rule" id="MF_00072"/>
    </source>
</evidence>
<sequence>MNLKQEVESRKTFAIISHPDAGKTTLTEKLLYFSGAIREAGTVKGKKTGKFATSDWMKVEQERGISVTSSVMQFDYDDYKINILDTPGHEDFSEDTYRTLMAVDSAVMVIDCAKGIEPQTLKLFKVCKMRGIPIFTFINKLDRVGKEPFELLDEIEETLNIETYPMNWPIGMGQSFFGIIDRKSKTIEPFRDEENILHLNDDFELEEDHAITNDSDFEQAIEELMLVEEAGEAFDNDALLSGDLTPVFFGSALANFGVQNFLNAYVDFAPMPNARQTKEDVEVSPFDDSFSGFIFKIQANMDPKHRDRIAFMRVVSGAFERGMDVTLQRTNKKQKITRSTSFMADDKETVNHAVAGDIIGLYDTGNYQIGDTLVGGKQTYSFQDLPQFTPEIFMKVSAKNVMKQKHFHKGIEQLVQEGAIQYYKTLHTNQIILGAVGQLQFEVFEHRMKNEYNVDVVMEPVGRKIARWIENEDQITDKMNTSRSILVKDRYDDLVFLFENEFATRWFEEKFPEIKLYSLL</sequence>
<accession>A8Z0C4</accession>
<comment type="function">
    <text evidence="1">Increases the formation of ribosomal termination complexes and stimulates activities of RF-1 and RF-2. It binds guanine nucleotides and has strong preference for UGA stop codons. It may interact directly with the ribosome. The stimulation of RF-1 and RF-2 is significantly reduced by GTP and GDP, but not by GMP.</text>
</comment>
<comment type="subcellular location">
    <subcellularLocation>
        <location evidence="1">Cytoplasm</location>
    </subcellularLocation>
</comment>
<comment type="similarity">
    <text evidence="1">Belongs to the TRAFAC class translation factor GTPase superfamily. Classic translation factor GTPase family. PrfC subfamily.</text>
</comment>
<organism>
    <name type="scientific">Staphylococcus aureus (strain USA300 / TCH1516)</name>
    <dbReference type="NCBI Taxonomy" id="451516"/>
    <lineage>
        <taxon>Bacteria</taxon>
        <taxon>Bacillati</taxon>
        <taxon>Bacillota</taxon>
        <taxon>Bacilli</taxon>
        <taxon>Bacillales</taxon>
        <taxon>Staphylococcaceae</taxon>
        <taxon>Staphylococcus</taxon>
    </lineage>
</organism>
<reference key="1">
    <citation type="journal article" date="2007" name="BMC Microbiol.">
        <title>Subtle genetic changes enhance virulence of methicillin resistant and sensitive Staphylococcus aureus.</title>
        <authorList>
            <person name="Highlander S.K."/>
            <person name="Hulten K.G."/>
            <person name="Qin X."/>
            <person name="Jiang H."/>
            <person name="Yerrapragada S."/>
            <person name="Mason E.O. Jr."/>
            <person name="Shang Y."/>
            <person name="Williams T.M."/>
            <person name="Fortunov R.M."/>
            <person name="Liu Y."/>
            <person name="Igboeli O."/>
            <person name="Petrosino J."/>
            <person name="Tirumalai M."/>
            <person name="Uzman A."/>
            <person name="Fox G.E."/>
            <person name="Cardenas A.M."/>
            <person name="Muzny D.M."/>
            <person name="Hemphill L."/>
            <person name="Ding Y."/>
            <person name="Dugan S."/>
            <person name="Blyth P.R."/>
            <person name="Buhay C.J."/>
            <person name="Dinh H.H."/>
            <person name="Hawes A.C."/>
            <person name="Holder M."/>
            <person name="Kovar C.L."/>
            <person name="Lee S.L."/>
            <person name="Liu W."/>
            <person name="Nazareth L.V."/>
            <person name="Wang Q."/>
            <person name="Zhou J."/>
            <person name="Kaplan S.L."/>
            <person name="Weinstock G.M."/>
        </authorList>
    </citation>
    <scope>NUCLEOTIDE SEQUENCE [LARGE SCALE GENOMIC DNA]</scope>
    <source>
        <strain>USA300 / TCH1516</strain>
    </source>
</reference>
<name>RF3_STAAT</name>